<reference key="1">
    <citation type="journal article" date="1999" name="Genetics">
        <title>Multiple chromosomes in bacteria. The yin and yang of trp gene localization in Rhodobacter sphaeroides 2.4.1.</title>
        <authorList>
            <person name="Mackenzie C."/>
            <person name="Simmons A.E."/>
            <person name="Kaplan S."/>
        </authorList>
    </citation>
    <scope>NUCLEOTIDE SEQUENCE [GENOMIC DNA]</scope>
</reference>
<reference key="2">
    <citation type="submission" date="2005-09" db="EMBL/GenBank/DDBJ databases">
        <title>Complete sequence of chromosome 1 of Rhodobacter sphaeroides 2.4.1.</title>
        <authorList>
            <person name="Copeland A."/>
            <person name="Lucas S."/>
            <person name="Lapidus A."/>
            <person name="Barry K."/>
            <person name="Detter J.C."/>
            <person name="Glavina T."/>
            <person name="Hammon N."/>
            <person name="Israni S."/>
            <person name="Pitluck S."/>
            <person name="Richardson P."/>
            <person name="Mackenzie C."/>
            <person name="Choudhary M."/>
            <person name="Larimer F."/>
            <person name="Hauser L.J."/>
            <person name="Land M."/>
            <person name="Donohue T.J."/>
            <person name="Kaplan S."/>
        </authorList>
    </citation>
    <scope>NUCLEOTIDE SEQUENCE [LARGE SCALE GENOMIC DNA]</scope>
    <source>
        <strain>ATCC 17023 / DSM 158 / JCM 6121 / CCUG 31486 / LMG 2827 / NBRC 12203 / NCIMB 8253 / ATH 2.4.1.</strain>
    </source>
</reference>
<reference key="3">
    <citation type="journal article" date="2000" name="Mol. Gen. Genet.">
        <title>Analysis of the expression of the Rhodobacter sphaeroides lexA gene.</title>
        <authorList>
            <person name="Tapias A."/>
            <person name="Campoy S."/>
            <person name="Barbe J."/>
        </authorList>
    </citation>
    <scope>FUNCTION</scope>
</reference>
<reference key="4">
    <citation type="journal article" date="1998" name="Mol. Microbiol.">
        <title>Identification of the Rhodobacter sphaeroides SOS box.</title>
        <authorList>
            <person name="Fernandez de Henestrosa A.R."/>
            <person name="Rivera E."/>
            <person name="Tapias A."/>
            <person name="Barbe J."/>
        </authorList>
    </citation>
    <scope>DNA-BINDING SPECIFICITY</scope>
</reference>
<sequence>MLTRKQMELLDFIKTRMDRDGVPPSFDEMKDALDLRSKSGIHRLITALEERGFIRRLAHRARAIEIVKLPEAMERAGFSARAAKAAAAPLPKGAVTVETAGALDLPLMGRIAAGLPIEAINGGPQSVTVPGMMLSGRGQHYALEVKGDSMIAAGINDGDIVVIREQQTADNGDIVVALVADHEATLKRYRRRGGMIALEPANDSYETQVYPEQMVKVQGRLVGLIRSY</sequence>
<dbReference type="EC" id="3.4.21.88" evidence="1"/>
<dbReference type="EMBL" id="AF108766">
    <property type="protein sequence ID" value="AAD09122.1"/>
    <property type="molecule type" value="Genomic_DNA"/>
</dbReference>
<dbReference type="EMBL" id="CP000143">
    <property type="protein sequence ID" value="ABA78147.1"/>
    <property type="molecule type" value="Genomic_DNA"/>
</dbReference>
<dbReference type="PIR" id="T46859">
    <property type="entry name" value="T46859"/>
</dbReference>
<dbReference type="RefSeq" id="WP_002719150.1">
    <property type="nucleotide sequence ID" value="NZ_CP030271.1"/>
</dbReference>
<dbReference type="RefSeq" id="YP_352048.1">
    <property type="nucleotide sequence ID" value="NC_007493.2"/>
</dbReference>
<dbReference type="SMR" id="Q9ZFA4"/>
<dbReference type="STRING" id="272943.RSP_1997"/>
<dbReference type="MEROPS" id="S24.001"/>
<dbReference type="EnsemblBacteria" id="ABA78147">
    <property type="protein sequence ID" value="ABA78147"/>
    <property type="gene ID" value="RSP_1997"/>
</dbReference>
<dbReference type="GeneID" id="3719330"/>
<dbReference type="KEGG" id="rsp:RSP_1997"/>
<dbReference type="PATRIC" id="fig|272943.9.peg.886"/>
<dbReference type="eggNOG" id="COG1974">
    <property type="taxonomic scope" value="Bacteria"/>
</dbReference>
<dbReference type="OrthoDB" id="9802364at2"/>
<dbReference type="PhylomeDB" id="Q9ZFA4"/>
<dbReference type="Proteomes" id="UP000002703">
    <property type="component" value="Chromosome 1"/>
</dbReference>
<dbReference type="CollecTF" id="EXPREG_000017e0"/>
<dbReference type="GO" id="GO:0032993">
    <property type="term" value="C:protein-DNA complex"/>
    <property type="evidence" value="ECO:0000315"/>
    <property type="project" value="CollecTF"/>
</dbReference>
<dbReference type="GO" id="GO:0001217">
    <property type="term" value="F:DNA-binding transcription repressor activity"/>
    <property type="evidence" value="ECO:0000315"/>
    <property type="project" value="CollecTF"/>
</dbReference>
<dbReference type="GO" id="GO:0004252">
    <property type="term" value="F:serine-type endopeptidase activity"/>
    <property type="evidence" value="ECO:0007669"/>
    <property type="project" value="UniProtKB-UniRule"/>
</dbReference>
<dbReference type="GO" id="GO:0000976">
    <property type="term" value="F:transcription cis-regulatory region binding"/>
    <property type="evidence" value="ECO:0000315"/>
    <property type="project" value="CollecTF"/>
</dbReference>
<dbReference type="GO" id="GO:0006281">
    <property type="term" value="P:DNA repair"/>
    <property type="evidence" value="ECO:0007669"/>
    <property type="project" value="UniProtKB-UniRule"/>
</dbReference>
<dbReference type="GO" id="GO:0006260">
    <property type="term" value="P:DNA replication"/>
    <property type="evidence" value="ECO:0007669"/>
    <property type="project" value="UniProtKB-UniRule"/>
</dbReference>
<dbReference type="GO" id="GO:0045892">
    <property type="term" value="P:negative regulation of DNA-templated transcription"/>
    <property type="evidence" value="ECO:0000270"/>
    <property type="project" value="CollecTF"/>
</dbReference>
<dbReference type="GO" id="GO:0006508">
    <property type="term" value="P:proteolysis"/>
    <property type="evidence" value="ECO:0007669"/>
    <property type="project" value="InterPro"/>
</dbReference>
<dbReference type="GO" id="GO:0009432">
    <property type="term" value="P:SOS response"/>
    <property type="evidence" value="ECO:0007669"/>
    <property type="project" value="UniProtKB-UniRule"/>
</dbReference>
<dbReference type="CDD" id="cd06529">
    <property type="entry name" value="S24_LexA-like"/>
    <property type="match status" value="1"/>
</dbReference>
<dbReference type="FunFam" id="1.10.10.10:FF:000102">
    <property type="entry name" value="LexA repressor"/>
    <property type="match status" value="1"/>
</dbReference>
<dbReference type="FunFam" id="2.10.109.10:FF:000001">
    <property type="entry name" value="LexA repressor"/>
    <property type="match status" value="1"/>
</dbReference>
<dbReference type="Gene3D" id="2.10.109.10">
    <property type="entry name" value="Umud Fragment, subunit A"/>
    <property type="match status" value="1"/>
</dbReference>
<dbReference type="Gene3D" id="1.10.10.10">
    <property type="entry name" value="Winged helix-like DNA-binding domain superfamily/Winged helix DNA-binding domain"/>
    <property type="match status" value="1"/>
</dbReference>
<dbReference type="HAMAP" id="MF_00015">
    <property type="entry name" value="LexA"/>
    <property type="match status" value="1"/>
</dbReference>
<dbReference type="InterPro" id="IPR006200">
    <property type="entry name" value="LexA"/>
</dbReference>
<dbReference type="InterPro" id="IPR039418">
    <property type="entry name" value="LexA-like"/>
</dbReference>
<dbReference type="InterPro" id="IPR036286">
    <property type="entry name" value="LexA/Signal_pep-like_sf"/>
</dbReference>
<dbReference type="InterPro" id="IPR006199">
    <property type="entry name" value="LexA_DNA-bd_dom"/>
</dbReference>
<dbReference type="InterPro" id="IPR050077">
    <property type="entry name" value="LexA_repressor"/>
</dbReference>
<dbReference type="InterPro" id="IPR006197">
    <property type="entry name" value="Peptidase_S24_LexA"/>
</dbReference>
<dbReference type="InterPro" id="IPR015927">
    <property type="entry name" value="Peptidase_S24_S26A/B/C"/>
</dbReference>
<dbReference type="InterPro" id="IPR036388">
    <property type="entry name" value="WH-like_DNA-bd_sf"/>
</dbReference>
<dbReference type="InterPro" id="IPR036390">
    <property type="entry name" value="WH_DNA-bd_sf"/>
</dbReference>
<dbReference type="NCBIfam" id="TIGR00498">
    <property type="entry name" value="lexA"/>
    <property type="match status" value="1"/>
</dbReference>
<dbReference type="PANTHER" id="PTHR33516">
    <property type="entry name" value="LEXA REPRESSOR"/>
    <property type="match status" value="1"/>
</dbReference>
<dbReference type="PANTHER" id="PTHR33516:SF2">
    <property type="entry name" value="LEXA REPRESSOR-RELATED"/>
    <property type="match status" value="1"/>
</dbReference>
<dbReference type="Pfam" id="PF01726">
    <property type="entry name" value="LexA_DNA_bind"/>
    <property type="match status" value="1"/>
</dbReference>
<dbReference type="Pfam" id="PF00717">
    <property type="entry name" value="Peptidase_S24"/>
    <property type="match status" value="1"/>
</dbReference>
<dbReference type="PRINTS" id="PR00726">
    <property type="entry name" value="LEXASERPTASE"/>
</dbReference>
<dbReference type="SUPFAM" id="SSF51306">
    <property type="entry name" value="LexA/Signal peptidase"/>
    <property type="match status" value="1"/>
</dbReference>
<dbReference type="SUPFAM" id="SSF46785">
    <property type="entry name" value="Winged helix' DNA-binding domain"/>
    <property type="match status" value="1"/>
</dbReference>
<gene>
    <name evidence="1" type="primary">lexA</name>
    <name type="ordered locus">RHOS4_05790</name>
    <name type="ORF">RSP_1997</name>
</gene>
<name>LEXA_CERS4</name>
<comment type="function">
    <text evidence="2">Represses a number of genes involved in the response to DNA damage (SOS response), including recA and lexA. Has been shown to bind to the direct repeat sequence 5'-GTT-N(7)-GTTC-3'. In the presence of single-stranded DNA, RecA interacts with LexA causing an autocatalytic cleavage which disrupts the DNA-binding part of LexA, leading to derepression of the SOS regulon and eventually DNA repair.</text>
</comment>
<comment type="catalytic activity">
    <reaction evidence="1">
        <text>Hydrolysis of Ala-|-Gly bond in repressor LexA.</text>
        <dbReference type="EC" id="3.4.21.88"/>
    </reaction>
</comment>
<comment type="subunit">
    <text evidence="1">Homodimer.</text>
</comment>
<comment type="similarity">
    <text evidence="1">Belongs to the peptidase S24 family.</text>
</comment>
<proteinExistence type="evidence at protein level"/>
<accession>Q9ZFA4</accession>
<accession>Q3J4Y7</accession>
<protein>
    <recommendedName>
        <fullName evidence="1">LexA repressor</fullName>
        <ecNumber evidence="1">3.4.21.88</ecNumber>
    </recommendedName>
</protein>
<feature type="chain" id="PRO_0000170079" description="LexA repressor">
    <location>
        <begin position="1"/>
        <end position="228"/>
    </location>
</feature>
<feature type="DNA-binding region" description="H-T-H motif" evidence="1">
    <location>
        <begin position="26"/>
        <end position="46"/>
    </location>
</feature>
<feature type="active site" description="For autocatalytic cleavage activity" evidence="1">
    <location>
        <position position="149"/>
    </location>
</feature>
<feature type="active site" description="For autocatalytic cleavage activity" evidence="1">
    <location>
        <position position="187"/>
    </location>
</feature>
<feature type="site" description="Cleavage; by autolysis" evidence="1">
    <location>
        <begin position="113"/>
        <end position="114"/>
    </location>
</feature>
<organism>
    <name type="scientific">Cereibacter sphaeroides (strain ATCC 17023 / DSM 158 / JCM 6121 / CCUG 31486 / LMG 2827 / NBRC 12203 / NCIMB 8253 / ATH 2.4.1.)</name>
    <name type="common">Rhodobacter sphaeroides</name>
    <dbReference type="NCBI Taxonomy" id="272943"/>
    <lineage>
        <taxon>Bacteria</taxon>
        <taxon>Pseudomonadati</taxon>
        <taxon>Pseudomonadota</taxon>
        <taxon>Alphaproteobacteria</taxon>
        <taxon>Rhodobacterales</taxon>
        <taxon>Paracoccaceae</taxon>
        <taxon>Cereibacter</taxon>
    </lineage>
</organism>
<evidence type="ECO:0000255" key="1">
    <source>
        <dbReference type="HAMAP-Rule" id="MF_00015"/>
    </source>
</evidence>
<evidence type="ECO:0000269" key="2">
    <source>
    </source>
</evidence>
<keyword id="KW-0068">Autocatalytic cleavage</keyword>
<keyword id="KW-0227">DNA damage</keyword>
<keyword id="KW-0234">DNA repair</keyword>
<keyword id="KW-0235">DNA replication</keyword>
<keyword id="KW-0238">DNA-binding</keyword>
<keyword id="KW-0378">Hydrolase</keyword>
<keyword id="KW-1185">Reference proteome</keyword>
<keyword id="KW-0678">Repressor</keyword>
<keyword id="KW-0742">SOS response</keyword>
<keyword id="KW-0804">Transcription</keyword>
<keyword id="KW-0805">Transcription regulation</keyword>